<accession>Q5IS37</accession>
<reference key="1">
    <citation type="journal article" date="2004" name="Cell">
        <title>Accelerated evolution of nervous system genes in the origin of Homo sapiens.</title>
        <authorList>
            <person name="Dorus S."/>
            <person name="Vallender E.J."/>
            <person name="Evans P.D."/>
            <person name="Anderson J.R."/>
            <person name="Gilbert S.L."/>
            <person name="Mahowald M."/>
            <person name="Wyckoff G.J."/>
            <person name="Malcom C.M."/>
            <person name="Lahn B.T."/>
        </authorList>
    </citation>
    <scope>NUCLEOTIDE SEQUENCE [MRNA]</scope>
</reference>
<sequence>MDVSLCPAKCSFWRIFLLGSVWLDYVGSVLACPANCVCSKTEINCRRPDDGNLFPLLEGQDSGNSNGNASINITDISRNITSIHIENWRSLHTLNAVDMELYTGLQKLTIKNSGLRSIQPRAFAKNPHLRYINLSSNRLTTLSWQLFQTLSLRELQLEQNFFNCSCDIRWMQLWQEQGEAKLNSQNLYCINTDGSQLPLFRMNISQCDLPEISVSHVNLTVREGDNAVITCNGSGSPLPDVDWIVTGLQSINTHQTNLNWTNVHAINLTLVNVTSEDNGFTLTCIAENVVGMSNASVALTVYYPPRVVSLEEPELRLEHCIEFVVRGNPPPTLHWLHNGQPLRESKIIHVEYYQEGEISEGCLLFNKPTHYNNGNYTLIAKNPLGTANQTISGHFLKEPFPESTDNFILFDEVSPTPPITVTHKPEEDTFGVSIAVGLAAFACVLLVVLFVMINKYGRRSKFGMKGPVAVISGEEDSASPLHHINHGITTPSSLDAGPDTVVIGMTRIPVIENPQYFRQGHNCHKPDTYVQHIKRRDIVLKRELGEGAFGKVFLAECYNLSPTKDKMLVAVKALKDPTLAARKDFQREAELLTNLQHEHIVKFYGVCGDGDPLIMVFEYMKHGDLNKFLRAHGPDAMILVDGQPRQAKGELGLSQMLHIASQIASGMVYLASQHFVHRDLATRNCLVGANLLVKIGDFGMSRDVYSTDYYRVGGHTMLPIRWMPPESIMYRKFTTESDVWSFGVILWEIFTYGKQPWFQLSNTEVIECITQGRVLERPRVCPKEVYDVMLGCWQREPQQRLNIKEIYKILHALGKATPIYLDILG</sequence>
<protein>
    <recommendedName>
        <fullName>NT-3 growth factor receptor</fullName>
        <ecNumber>2.7.10.1</ecNumber>
    </recommendedName>
    <alternativeName>
        <fullName>Neurotrophic tyrosine kinase receptor type 3</fullName>
    </alternativeName>
</protein>
<keyword id="KW-0067">ATP-binding</keyword>
<keyword id="KW-0217">Developmental protein</keyword>
<keyword id="KW-0221">Differentiation</keyword>
<keyword id="KW-1015">Disulfide bond</keyword>
<keyword id="KW-0325">Glycoprotein</keyword>
<keyword id="KW-0393">Immunoglobulin domain</keyword>
<keyword id="KW-0418">Kinase</keyword>
<keyword id="KW-0433">Leucine-rich repeat</keyword>
<keyword id="KW-0472">Membrane</keyword>
<keyword id="KW-0524">Neurogenesis</keyword>
<keyword id="KW-0547">Nucleotide-binding</keyword>
<keyword id="KW-0597">Phosphoprotein</keyword>
<keyword id="KW-0675">Receptor</keyword>
<keyword id="KW-1185">Reference proteome</keyword>
<keyword id="KW-0677">Repeat</keyword>
<keyword id="KW-0732">Signal</keyword>
<keyword id="KW-0808">Transferase</keyword>
<keyword id="KW-0812">Transmembrane</keyword>
<keyword id="KW-1133">Transmembrane helix</keyword>
<keyword id="KW-0829">Tyrosine-protein kinase</keyword>
<gene>
    <name type="primary">NTRK3</name>
</gene>
<comment type="function">
    <text evidence="4">Receptor tyrosine kinase involved in nervous system and probably heart development. Upon binding of its ligand NTF3/neurotrophin-3, NTRK3 autophosphorylates and activates different signaling pathways, including the phosphatidylinositol 3-kinase/AKT and the MAPK pathways, that control cell survival and differentiation.</text>
</comment>
<comment type="catalytic activity">
    <reaction evidence="10">
        <text>L-tyrosyl-[protein] + ATP = O-phospho-L-tyrosyl-[protein] + ADP + H(+)</text>
        <dbReference type="Rhea" id="RHEA:10596"/>
        <dbReference type="Rhea" id="RHEA-COMP:10136"/>
        <dbReference type="Rhea" id="RHEA-COMP:20101"/>
        <dbReference type="ChEBI" id="CHEBI:15378"/>
        <dbReference type="ChEBI" id="CHEBI:30616"/>
        <dbReference type="ChEBI" id="CHEBI:46858"/>
        <dbReference type="ChEBI" id="CHEBI:61978"/>
        <dbReference type="ChEBI" id="CHEBI:456216"/>
        <dbReference type="EC" id="2.7.10.1"/>
    </reaction>
</comment>
<comment type="subunit">
    <text evidence="2 3">Exists in a dynamic equilibrium between monomeric (low affinity) and dimeric (high affinity) structures (By similarity). Binds SH2B2. Interacts with SQSTM1 and KIDINS220. Interacts with PTPRS (By similarity). Interacts with MAPK8IP3/JIP3 (By similarity).</text>
</comment>
<comment type="subcellular location">
    <subcellularLocation>
        <location evidence="1">Membrane</location>
        <topology evidence="1">Single-pass type I membrane protein</topology>
    </subcellularLocation>
</comment>
<comment type="PTM">
    <text evidence="1">Ligand-mediated auto-phosphorylation.</text>
</comment>
<comment type="similarity">
    <text evidence="9">Belongs to the protein kinase superfamily. Tyr protein kinase family. Insulin receptor subfamily.</text>
</comment>
<organism>
    <name type="scientific">Pan troglodytes</name>
    <name type="common">Chimpanzee</name>
    <dbReference type="NCBI Taxonomy" id="9598"/>
    <lineage>
        <taxon>Eukaryota</taxon>
        <taxon>Metazoa</taxon>
        <taxon>Chordata</taxon>
        <taxon>Craniata</taxon>
        <taxon>Vertebrata</taxon>
        <taxon>Euteleostomi</taxon>
        <taxon>Mammalia</taxon>
        <taxon>Eutheria</taxon>
        <taxon>Euarchontoglires</taxon>
        <taxon>Primates</taxon>
        <taxon>Haplorrhini</taxon>
        <taxon>Catarrhini</taxon>
        <taxon>Hominidae</taxon>
        <taxon>Pan</taxon>
    </lineage>
</organism>
<feature type="signal peptide" evidence="1">
    <location>
        <begin position="1"/>
        <end position="31"/>
    </location>
</feature>
<feature type="chain" id="PRO_0000016733" description="NT-3 growth factor receptor">
    <location>
        <begin position="32"/>
        <end position="825"/>
    </location>
</feature>
<feature type="topological domain" description="Extracellular" evidence="7">
    <location>
        <begin position="32"/>
        <end position="429"/>
    </location>
</feature>
<feature type="transmembrane region" description="Helical" evidence="7">
    <location>
        <begin position="430"/>
        <end position="453"/>
    </location>
</feature>
<feature type="topological domain" description="Cytoplasmic" evidence="7">
    <location>
        <begin position="454"/>
        <end position="825"/>
    </location>
</feature>
<feature type="repeat" description="LRR 1">
    <location>
        <begin position="104"/>
        <end position="125"/>
    </location>
</feature>
<feature type="repeat" description="LRR 2">
    <location>
        <begin position="128"/>
        <end position="149"/>
    </location>
</feature>
<feature type="domain" description="LRRCT">
    <location>
        <begin position="160"/>
        <end position="209"/>
    </location>
</feature>
<feature type="domain" description="Ig-like C2-type 1">
    <location>
        <begin position="210"/>
        <end position="300"/>
    </location>
</feature>
<feature type="domain" description="Ig-like C2-type 2">
    <location>
        <begin position="309"/>
        <end position="382"/>
    </location>
</feature>
<feature type="domain" description="Protein kinase" evidence="9">
    <location>
        <begin position="538"/>
        <end position="825"/>
    </location>
</feature>
<feature type="active site" description="Proton acceptor" evidence="9 10">
    <location>
        <position position="679"/>
    </location>
</feature>
<feature type="binding site" evidence="9">
    <location>
        <begin position="544"/>
        <end position="552"/>
    </location>
    <ligand>
        <name>ATP</name>
        <dbReference type="ChEBI" id="CHEBI:30616"/>
    </ligand>
</feature>
<feature type="binding site" evidence="9">
    <location>
        <position position="572"/>
    </location>
    <ligand>
        <name>ATP</name>
        <dbReference type="ChEBI" id="CHEBI:30616"/>
    </ligand>
</feature>
<feature type="site" description="Interaction with SHC1" evidence="1">
    <location>
        <position position="516"/>
    </location>
</feature>
<feature type="site" description="Interaction with PLC-gamma-1" evidence="1">
    <location>
        <position position="820"/>
    </location>
</feature>
<feature type="modified residue" description="Phosphoserine" evidence="5">
    <location>
        <position position="493"/>
    </location>
</feature>
<feature type="modified residue" description="Phosphotyrosine; by autocatalysis" evidence="4">
    <location>
        <position position="516"/>
    </location>
</feature>
<feature type="modified residue" description="Phosphotyrosine; by autocatalysis" evidence="1">
    <location>
        <position position="705"/>
    </location>
</feature>
<feature type="modified residue" description="Phosphotyrosine; by autocatalysis" evidence="1">
    <location>
        <position position="709"/>
    </location>
</feature>
<feature type="modified residue" description="Phosphotyrosine; by autocatalysis" evidence="1">
    <location>
        <position position="710"/>
    </location>
</feature>
<feature type="glycosylation site" description="N-linked (GlcNAc...) asparagine" evidence="7">
    <location>
        <position position="68"/>
    </location>
</feature>
<feature type="glycosylation site" description="N-linked (GlcNAc...) asparagine" evidence="7">
    <location>
        <position position="72"/>
    </location>
</feature>
<feature type="glycosylation site" description="N-linked (GlcNAc...) asparagine" evidence="7">
    <location>
        <position position="79"/>
    </location>
</feature>
<feature type="glycosylation site" description="N-linked (GlcNAc...) asparagine" evidence="7">
    <location>
        <position position="133"/>
    </location>
</feature>
<feature type="glycosylation site" description="N-linked (GlcNAc...) asparagine" evidence="7">
    <location>
        <position position="163"/>
    </location>
</feature>
<feature type="glycosylation site" description="N-linked (GlcNAc...) asparagine" evidence="7">
    <location>
        <position position="203"/>
    </location>
</feature>
<feature type="glycosylation site" description="N-linked (GlcNAc...) asparagine" evidence="7">
    <location>
        <position position="218"/>
    </location>
</feature>
<feature type="glycosylation site" description="N-linked (GlcNAc...) asparagine" evidence="7">
    <location>
        <position position="232"/>
    </location>
</feature>
<feature type="glycosylation site" description="N-linked (GlcNAc...) asparagine" evidence="7">
    <location>
        <position position="259"/>
    </location>
</feature>
<feature type="glycosylation site" description="N-linked (GlcNAc...) asparagine" evidence="7">
    <location>
        <position position="267"/>
    </location>
</feature>
<feature type="glycosylation site" description="N-linked (GlcNAc...) asparagine" evidence="7">
    <location>
        <position position="272"/>
    </location>
</feature>
<feature type="glycosylation site" description="N-linked (GlcNAc...) asparagine" evidence="7">
    <location>
        <position position="294"/>
    </location>
</feature>
<feature type="glycosylation site" description="N-linked (GlcNAc...) asparagine" evidence="7">
    <location>
        <position position="375"/>
    </location>
</feature>
<feature type="glycosylation site" description="N-linked (GlcNAc...) asparagine" evidence="7">
    <location>
        <position position="388"/>
    </location>
</feature>
<feature type="disulfide bond" evidence="6">
    <location>
        <begin position="32"/>
        <end position="38"/>
    </location>
</feature>
<feature type="disulfide bond" evidence="6">
    <location>
        <begin position="36"/>
        <end position="45"/>
    </location>
</feature>
<feature type="disulfide bond" evidence="6">
    <location>
        <begin position="164"/>
        <end position="189"/>
    </location>
</feature>
<feature type="disulfide bond" evidence="6">
    <location>
        <begin position="166"/>
        <end position="207"/>
    </location>
</feature>
<feature type="disulfide bond" evidence="6">
    <location>
        <begin position="231"/>
        <end position="284"/>
    </location>
</feature>
<feature type="disulfide bond" evidence="8">
    <location>
        <begin position="320"/>
        <end position="362"/>
    </location>
</feature>
<proteinExistence type="evidence at transcript level"/>
<dbReference type="EC" id="2.7.10.1"/>
<dbReference type="EMBL" id="AY665291">
    <property type="protein sequence ID" value="AAV74329.1"/>
    <property type="molecule type" value="mRNA"/>
</dbReference>
<dbReference type="RefSeq" id="NP_001029295.1">
    <property type="nucleotide sequence ID" value="NM_001034123.1"/>
</dbReference>
<dbReference type="SMR" id="Q5IS37"/>
<dbReference type="STRING" id="9598.ENSPTRP00000085547"/>
<dbReference type="GlyCosmos" id="Q5IS37">
    <property type="glycosylation" value="14 sites, No reported glycans"/>
</dbReference>
<dbReference type="PaxDb" id="9598-ENSPTRP00000045137"/>
<dbReference type="GeneID" id="467751"/>
<dbReference type="KEGG" id="ptr:467751"/>
<dbReference type="CTD" id="4916"/>
<dbReference type="eggNOG" id="KOG1026">
    <property type="taxonomic scope" value="Eukaryota"/>
</dbReference>
<dbReference type="InParanoid" id="Q5IS37"/>
<dbReference type="Proteomes" id="UP000002277">
    <property type="component" value="Unplaced"/>
</dbReference>
<dbReference type="GO" id="GO:0030424">
    <property type="term" value="C:axon"/>
    <property type="evidence" value="ECO:0000318"/>
    <property type="project" value="GO_Central"/>
</dbReference>
<dbReference type="GO" id="GO:0005886">
    <property type="term" value="C:plasma membrane"/>
    <property type="evidence" value="ECO:0000318"/>
    <property type="project" value="GO_Central"/>
</dbReference>
<dbReference type="GO" id="GO:0043235">
    <property type="term" value="C:receptor complex"/>
    <property type="evidence" value="ECO:0000318"/>
    <property type="project" value="GO_Central"/>
</dbReference>
<dbReference type="GO" id="GO:0005524">
    <property type="term" value="F:ATP binding"/>
    <property type="evidence" value="ECO:0007669"/>
    <property type="project" value="UniProtKB-KW"/>
</dbReference>
<dbReference type="GO" id="GO:0043121">
    <property type="term" value="F:neurotrophin binding"/>
    <property type="evidence" value="ECO:0000318"/>
    <property type="project" value="GO_Central"/>
</dbReference>
<dbReference type="GO" id="GO:0005030">
    <property type="term" value="F:neurotrophin receptor activity"/>
    <property type="evidence" value="ECO:0000318"/>
    <property type="project" value="GO_Central"/>
</dbReference>
<dbReference type="GO" id="GO:0004714">
    <property type="term" value="F:transmembrane receptor protein tyrosine kinase activity"/>
    <property type="evidence" value="ECO:0000318"/>
    <property type="project" value="GO_Central"/>
</dbReference>
<dbReference type="GO" id="GO:0030154">
    <property type="term" value="P:cell differentiation"/>
    <property type="evidence" value="ECO:0007669"/>
    <property type="project" value="UniProtKB-KW"/>
</dbReference>
<dbReference type="GO" id="GO:0007169">
    <property type="term" value="P:cell surface receptor protein tyrosine kinase signaling pathway"/>
    <property type="evidence" value="ECO:0000318"/>
    <property type="project" value="GO_Central"/>
</dbReference>
<dbReference type="GO" id="GO:1990090">
    <property type="term" value="P:cellular response to nerve growth factor stimulus"/>
    <property type="evidence" value="ECO:0000318"/>
    <property type="project" value="GO_Central"/>
</dbReference>
<dbReference type="GO" id="GO:0007507">
    <property type="term" value="P:heart development"/>
    <property type="evidence" value="ECO:0000250"/>
    <property type="project" value="UniProtKB"/>
</dbReference>
<dbReference type="GO" id="GO:0007399">
    <property type="term" value="P:nervous system development"/>
    <property type="evidence" value="ECO:0007669"/>
    <property type="project" value="UniProtKB-KW"/>
</dbReference>
<dbReference type="GO" id="GO:0010976">
    <property type="term" value="P:positive regulation of neuron projection development"/>
    <property type="evidence" value="ECO:0000318"/>
    <property type="project" value="GO_Central"/>
</dbReference>
<dbReference type="GO" id="GO:0051897">
    <property type="term" value="P:positive regulation of phosphatidylinositol 3-kinase/protein kinase B signal transduction"/>
    <property type="evidence" value="ECO:0000318"/>
    <property type="project" value="GO_Central"/>
</dbReference>
<dbReference type="CDD" id="cd04971">
    <property type="entry name" value="IgI_TrKABC_d5"/>
    <property type="match status" value="1"/>
</dbReference>
<dbReference type="CDD" id="cd05094">
    <property type="entry name" value="PTKc_TrkC"/>
    <property type="match status" value="1"/>
</dbReference>
<dbReference type="FunFam" id="1.10.510.10:FF:000701">
    <property type="entry name" value="Tyrosine-protein kinase receptor"/>
    <property type="match status" value="1"/>
</dbReference>
<dbReference type="FunFam" id="2.60.40.10:FF:000251">
    <property type="entry name" value="Tyrosine-protein kinase receptor"/>
    <property type="match status" value="1"/>
</dbReference>
<dbReference type="FunFam" id="2.60.40.10:FF:000265">
    <property type="entry name" value="Tyrosine-protein kinase receptor"/>
    <property type="match status" value="1"/>
</dbReference>
<dbReference type="FunFam" id="3.30.200.20:FF:000033">
    <property type="entry name" value="Tyrosine-protein kinase receptor"/>
    <property type="match status" value="1"/>
</dbReference>
<dbReference type="FunFam" id="3.80.10.10:FF:000035">
    <property type="entry name" value="Tyrosine-protein kinase receptor"/>
    <property type="match status" value="1"/>
</dbReference>
<dbReference type="Gene3D" id="2.60.40.10">
    <property type="entry name" value="Immunoglobulins"/>
    <property type="match status" value="2"/>
</dbReference>
<dbReference type="Gene3D" id="3.30.200.20">
    <property type="entry name" value="Phosphorylase Kinase, domain 1"/>
    <property type="match status" value="1"/>
</dbReference>
<dbReference type="Gene3D" id="3.80.10.10">
    <property type="entry name" value="Ribonuclease Inhibitor"/>
    <property type="match status" value="1"/>
</dbReference>
<dbReference type="Gene3D" id="1.10.510.10">
    <property type="entry name" value="Transferase(Phosphotransferase) domain 1"/>
    <property type="match status" value="1"/>
</dbReference>
<dbReference type="InterPro" id="IPR000483">
    <property type="entry name" value="Cys-rich_flank_reg_C"/>
</dbReference>
<dbReference type="InterPro" id="IPR007110">
    <property type="entry name" value="Ig-like_dom"/>
</dbReference>
<dbReference type="InterPro" id="IPR036179">
    <property type="entry name" value="Ig-like_dom_sf"/>
</dbReference>
<dbReference type="InterPro" id="IPR013783">
    <property type="entry name" value="Ig-like_fold"/>
</dbReference>
<dbReference type="InterPro" id="IPR013098">
    <property type="entry name" value="Ig_I-set"/>
</dbReference>
<dbReference type="InterPro" id="IPR003599">
    <property type="entry name" value="Ig_sub"/>
</dbReference>
<dbReference type="InterPro" id="IPR013151">
    <property type="entry name" value="Immunoglobulin_dom"/>
</dbReference>
<dbReference type="InterPro" id="IPR011009">
    <property type="entry name" value="Kinase-like_dom_sf"/>
</dbReference>
<dbReference type="InterPro" id="IPR001611">
    <property type="entry name" value="Leu-rich_rpt"/>
</dbReference>
<dbReference type="InterPro" id="IPR032675">
    <property type="entry name" value="LRR_dom_sf"/>
</dbReference>
<dbReference type="InterPro" id="IPR000372">
    <property type="entry name" value="LRRNT"/>
</dbReference>
<dbReference type="InterPro" id="IPR020777">
    <property type="entry name" value="NTRK"/>
</dbReference>
<dbReference type="InterPro" id="IPR020446">
    <property type="entry name" value="NTRK3"/>
</dbReference>
<dbReference type="InterPro" id="IPR031635">
    <property type="entry name" value="NTRK_LRRCT"/>
</dbReference>
<dbReference type="InterPro" id="IPR000719">
    <property type="entry name" value="Prot_kinase_dom"/>
</dbReference>
<dbReference type="InterPro" id="IPR017441">
    <property type="entry name" value="Protein_kinase_ATP_BS"/>
</dbReference>
<dbReference type="InterPro" id="IPR050122">
    <property type="entry name" value="RTK"/>
</dbReference>
<dbReference type="InterPro" id="IPR001245">
    <property type="entry name" value="Ser-Thr/Tyr_kinase_cat_dom"/>
</dbReference>
<dbReference type="InterPro" id="IPR008266">
    <property type="entry name" value="Tyr_kinase_AS"/>
</dbReference>
<dbReference type="InterPro" id="IPR020635">
    <property type="entry name" value="Tyr_kinase_cat_dom"/>
</dbReference>
<dbReference type="InterPro" id="IPR002011">
    <property type="entry name" value="Tyr_kinase_rcpt_2_CS"/>
</dbReference>
<dbReference type="PANTHER" id="PTHR24416:SF66">
    <property type="entry name" value="NT-3 GROWTH FACTOR RECEPTOR"/>
    <property type="match status" value="1"/>
</dbReference>
<dbReference type="PANTHER" id="PTHR24416">
    <property type="entry name" value="TYROSINE-PROTEIN KINASE RECEPTOR"/>
    <property type="match status" value="1"/>
</dbReference>
<dbReference type="Pfam" id="PF07679">
    <property type="entry name" value="I-set"/>
    <property type="match status" value="1"/>
</dbReference>
<dbReference type="Pfam" id="PF00047">
    <property type="entry name" value="ig"/>
    <property type="match status" value="1"/>
</dbReference>
<dbReference type="Pfam" id="PF13855">
    <property type="entry name" value="LRR_8"/>
    <property type="match status" value="1"/>
</dbReference>
<dbReference type="Pfam" id="PF16920">
    <property type="entry name" value="LRRCT_2"/>
    <property type="match status" value="1"/>
</dbReference>
<dbReference type="Pfam" id="PF01462">
    <property type="entry name" value="LRRNT"/>
    <property type="match status" value="1"/>
</dbReference>
<dbReference type="Pfam" id="PF07714">
    <property type="entry name" value="PK_Tyr_Ser-Thr"/>
    <property type="match status" value="1"/>
</dbReference>
<dbReference type="PRINTS" id="PR01939">
    <property type="entry name" value="NTKRECEPTOR"/>
</dbReference>
<dbReference type="PRINTS" id="PR01942">
    <property type="entry name" value="NTKRECEPTOR3"/>
</dbReference>
<dbReference type="PRINTS" id="PR00109">
    <property type="entry name" value="TYRKINASE"/>
</dbReference>
<dbReference type="SMART" id="SM00409">
    <property type="entry name" value="IG"/>
    <property type="match status" value="1"/>
</dbReference>
<dbReference type="SMART" id="SM00082">
    <property type="entry name" value="LRRCT"/>
    <property type="match status" value="1"/>
</dbReference>
<dbReference type="SMART" id="SM00013">
    <property type="entry name" value="LRRNT"/>
    <property type="match status" value="1"/>
</dbReference>
<dbReference type="SMART" id="SM00219">
    <property type="entry name" value="TyrKc"/>
    <property type="match status" value="1"/>
</dbReference>
<dbReference type="SUPFAM" id="SSF48726">
    <property type="entry name" value="Immunoglobulin"/>
    <property type="match status" value="2"/>
</dbReference>
<dbReference type="SUPFAM" id="SSF52058">
    <property type="entry name" value="L domain-like"/>
    <property type="match status" value="1"/>
</dbReference>
<dbReference type="SUPFAM" id="SSF56112">
    <property type="entry name" value="Protein kinase-like (PK-like)"/>
    <property type="match status" value="1"/>
</dbReference>
<dbReference type="PROSITE" id="PS50835">
    <property type="entry name" value="IG_LIKE"/>
    <property type="match status" value="1"/>
</dbReference>
<dbReference type="PROSITE" id="PS51450">
    <property type="entry name" value="LRR"/>
    <property type="match status" value="1"/>
</dbReference>
<dbReference type="PROSITE" id="PS00107">
    <property type="entry name" value="PROTEIN_KINASE_ATP"/>
    <property type="match status" value="1"/>
</dbReference>
<dbReference type="PROSITE" id="PS50011">
    <property type="entry name" value="PROTEIN_KINASE_DOM"/>
    <property type="match status" value="1"/>
</dbReference>
<dbReference type="PROSITE" id="PS00109">
    <property type="entry name" value="PROTEIN_KINASE_TYR"/>
    <property type="match status" value="1"/>
</dbReference>
<dbReference type="PROSITE" id="PS00239">
    <property type="entry name" value="RECEPTOR_TYR_KIN_II"/>
    <property type="match status" value="1"/>
</dbReference>
<evidence type="ECO:0000250" key="1"/>
<evidence type="ECO:0000250" key="2">
    <source>
        <dbReference type="UniProtKB" id="P04629"/>
    </source>
</evidence>
<evidence type="ECO:0000250" key="3">
    <source>
        <dbReference type="UniProtKB" id="Q03351"/>
    </source>
</evidence>
<evidence type="ECO:0000250" key="4">
    <source>
        <dbReference type="UniProtKB" id="Q16288"/>
    </source>
</evidence>
<evidence type="ECO:0000250" key="5">
    <source>
        <dbReference type="UniProtKB" id="Q6VNS1"/>
    </source>
</evidence>
<evidence type="ECO:0000250" key="6">
    <source>
        <dbReference type="UniProtKB" id="Q91044"/>
    </source>
</evidence>
<evidence type="ECO:0000255" key="7"/>
<evidence type="ECO:0000255" key="8">
    <source>
        <dbReference type="PROSITE-ProRule" id="PRU00114"/>
    </source>
</evidence>
<evidence type="ECO:0000255" key="9">
    <source>
        <dbReference type="PROSITE-ProRule" id="PRU00159"/>
    </source>
</evidence>
<evidence type="ECO:0000255" key="10">
    <source>
        <dbReference type="PROSITE-ProRule" id="PRU10028"/>
    </source>
</evidence>
<name>NTRK3_PANTR</name>